<dbReference type="EMBL" id="L22579">
    <property type="protein sequence ID" value="AAA60825.1"/>
    <property type="molecule type" value="Genomic_DNA"/>
</dbReference>
<dbReference type="PIR" id="T28515">
    <property type="entry name" value="T28515"/>
</dbReference>
<dbReference type="SMR" id="P0DOU2"/>
<dbReference type="KEGG" id="vg:1486474"/>
<dbReference type="Proteomes" id="UP000119805">
    <property type="component" value="Segment"/>
</dbReference>
<dbReference type="GO" id="GO:0016020">
    <property type="term" value="C:membrane"/>
    <property type="evidence" value="ECO:0007669"/>
    <property type="project" value="UniProtKB-KW"/>
</dbReference>
<dbReference type="GO" id="GO:0019031">
    <property type="term" value="C:viral envelope"/>
    <property type="evidence" value="ECO:0007669"/>
    <property type="project" value="UniProtKB-KW"/>
</dbReference>
<dbReference type="GO" id="GO:0055036">
    <property type="term" value="C:virion membrane"/>
    <property type="evidence" value="ECO:0007669"/>
    <property type="project" value="UniProtKB-SubCell"/>
</dbReference>
<dbReference type="GO" id="GO:0019064">
    <property type="term" value="P:fusion of virus membrane with host plasma membrane"/>
    <property type="evidence" value="ECO:0007669"/>
    <property type="project" value="UniProtKB-KW"/>
</dbReference>
<dbReference type="GO" id="GO:0046718">
    <property type="term" value="P:symbiont entry into host cell"/>
    <property type="evidence" value="ECO:0007669"/>
    <property type="project" value="UniProtKB-KW"/>
</dbReference>
<dbReference type="InterPro" id="IPR006956">
    <property type="entry name" value="Poxvirus_L5"/>
</dbReference>
<dbReference type="Pfam" id="PF04872">
    <property type="entry name" value="Pox_L5"/>
    <property type="match status" value="1"/>
</dbReference>
<evidence type="ECO:0000250" key="1">
    <source>
        <dbReference type="UniProtKB" id="P68623"/>
    </source>
</evidence>
<evidence type="ECO:0000255" key="2"/>
<evidence type="ECO:0000305" key="3"/>
<reference key="1">
    <citation type="journal article" date="1993" name="Nature">
        <title>Potential virulence determinants in terminal regions of variola smallpox virus genome.</title>
        <authorList>
            <person name="Massung R.F."/>
            <person name="Esposito J.J."/>
            <person name="Liu L.I."/>
            <person name="Qi J."/>
            <person name="Utterback T.R."/>
            <person name="Knight J.C."/>
            <person name="Aubin L."/>
            <person name="Yuran T.E."/>
            <person name="Parsons J.M."/>
            <person name="Loparev V.N."/>
            <person name="Selivanov N.A."/>
            <person name="Cavallaro K.F."/>
            <person name="Kerlavage A.R."/>
            <person name="Mahy B.W.J."/>
            <person name="Venter J.C."/>
        </authorList>
    </citation>
    <scope>NUCLEOTIDE SEQUENCE [GENOMIC DNA]</scope>
    <source>
        <strain>Bangladesh-1975</strain>
    </source>
</reference>
<name>PG099_VARV</name>
<keyword id="KW-1015">Disulfide bond</keyword>
<keyword id="KW-1169">Fusion of virus membrane with host cell membrane</keyword>
<keyword id="KW-1168">Fusion of virus membrane with host membrane</keyword>
<keyword id="KW-0426">Late protein</keyword>
<keyword id="KW-0472">Membrane</keyword>
<keyword id="KW-0735">Signal-anchor</keyword>
<keyword id="KW-0812">Transmembrane</keyword>
<keyword id="KW-1133">Transmembrane helix</keyword>
<keyword id="KW-0261">Viral envelope protein</keyword>
<keyword id="KW-1162">Viral penetration into host cytoplasm</keyword>
<keyword id="KW-0946">Virion</keyword>
<keyword id="KW-1160">Virus entry into host cell</keyword>
<organismHost>
    <name type="scientific">Homo sapiens</name>
    <name type="common">Human</name>
    <dbReference type="NCBI Taxonomy" id="9606"/>
</organismHost>
<comment type="function">
    <text evidence="1">Component of the entry fusion complex (EFC), which consists of 11 proteins. During cell infection, this complex mediates entry of the virion core into the host cytoplasm by a two-step mechanism consisting of lipid mixing of the viral and cellular membranes and subsequent pore formation.</text>
</comment>
<comment type="subunit">
    <text evidence="1">Interacts with OPG086. Component of the entry fusion complex (EFC) composed of OPG053, OPG076, OPG086, OPG094, OPG095, OPG099, OPG107, OPG143, OPG104J5, OPG147 and OPG155. Except for OPG095 and OPG053, each of the EFC proteins is required for assembly or stability of the complex.</text>
</comment>
<comment type="subcellular location">
    <subcellularLocation>
        <location evidence="1">Virion membrane</location>
        <topology evidence="1">Single-pass type III membrane protein</topology>
    </subcellularLocation>
    <text evidence="1">Component of the mature virion (MV) membrane. The mature virion is located in the cytoplasm of infected cells and is probably released by cell lysis.</text>
</comment>
<comment type="induction">
    <text evidence="1">Expressed in the late phase of the viral replicative cycle.</text>
</comment>
<comment type="PTM">
    <text evidence="1">Most cysteines are linked by disulfide bonds. They are created by the viral disulfide bond formation pathway, a poxvirus-specific redox pathway that operates on the cytoplasmic side of the MV membranes.</text>
</comment>
<comment type="PTM">
    <text evidence="1">Unglycosylated because produced in viral factories instead of the classic ER -Golgi route.</text>
</comment>
<comment type="similarity">
    <text evidence="3">Belongs to the orthopoxvirus OPG099 family.</text>
</comment>
<organism>
    <name type="scientific">Variola virus</name>
    <dbReference type="NCBI Taxonomy" id="10255"/>
    <lineage>
        <taxon>Viruses</taxon>
        <taxon>Varidnaviria</taxon>
        <taxon>Bamfordvirae</taxon>
        <taxon>Nucleocytoviricota</taxon>
        <taxon>Pokkesviricetes</taxon>
        <taxon>Chitovirales</taxon>
        <taxon>Poxviridae</taxon>
        <taxon>Chordopoxvirinae</taxon>
        <taxon>Orthopoxvirus</taxon>
    </lineage>
</organism>
<gene>
    <name type="primary">OPG099</name>
    <name type="ORF">L5R</name>
</gene>
<accession>P0DOU2</accession>
<accession>P33043</accession>
<proteinExistence type="inferred from homology"/>
<sequence>MENVPNVYFNPVFIEPTFKHSLLSVYKHRLIVLFEVFVVFILIYVFFRSELNMFFMHKRKIPDPIDRLRRANLACEDDKLMIYGLPWITTQTSALSINSKPIVYKDCAKLLRSINGSQPVSLNDVLRR</sequence>
<protein>
    <recommendedName>
        <fullName>Entry-fusion complex protein OPG094</fullName>
        <shortName>EFC protein OPG094</shortName>
    </recommendedName>
    <alternativeName>
        <fullName>Protein L5</fullName>
    </alternativeName>
</protein>
<feature type="chain" id="PRO_0000448207" description="Entry-fusion complex protein OPG094">
    <location>
        <begin position="1"/>
        <end position="128"/>
    </location>
</feature>
<feature type="topological domain" description="Intravirion" evidence="2">
    <location>
        <begin position="1"/>
        <end position="30"/>
    </location>
</feature>
<feature type="transmembrane region" description="Helical; Signal-anchor for type III membrane protein" evidence="2">
    <location>
        <begin position="31"/>
        <end position="51"/>
    </location>
</feature>
<feature type="topological domain" description="Virion surface" evidence="2">
    <location>
        <begin position="52"/>
        <end position="107"/>
    </location>
</feature>
<feature type="disulfide bond" description="By viral enzyme" evidence="1">
    <location>
        <begin position="75"/>
        <end position="107"/>
    </location>
</feature>